<proteinExistence type="inferred from homology"/>
<reference key="1">
    <citation type="journal article" date="2009" name="PLoS ONE">
        <title>Complete genome sequence of Francisella tularensis subspecies holarctica FTNF002-00.</title>
        <authorList>
            <person name="Barabote R.D."/>
            <person name="Xie G."/>
            <person name="Brettin T.S."/>
            <person name="Hinrichs S.H."/>
            <person name="Fey P.D."/>
            <person name="Jay J.J."/>
            <person name="Engle J.L."/>
            <person name="Godbole S.D."/>
            <person name="Noronha J.M."/>
            <person name="Scheuermann R.H."/>
            <person name="Zhou L.W."/>
            <person name="Lion C."/>
            <person name="Dempsey M.P."/>
        </authorList>
    </citation>
    <scope>NUCLEOTIDE SEQUENCE [LARGE SCALE GENOMIC DNA]</scope>
    <source>
        <strain>FTNF002-00 / FTA</strain>
    </source>
</reference>
<feature type="chain" id="PRO_1000031142" description="Ribonuclease HII">
    <location>
        <begin position="1"/>
        <end position="187"/>
    </location>
</feature>
<feature type="domain" description="RNase H type-2" evidence="2">
    <location>
        <begin position="1"/>
        <end position="187"/>
    </location>
</feature>
<feature type="binding site" evidence="1">
    <location>
        <position position="7"/>
    </location>
    <ligand>
        <name>a divalent metal cation</name>
        <dbReference type="ChEBI" id="CHEBI:60240"/>
    </ligand>
</feature>
<feature type="binding site" evidence="1">
    <location>
        <position position="8"/>
    </location>
    <ligand>
        <name>a divalent metal cation</name>
        <dbReference type="ChEBI" id="CHEBI:60240"/>
    </ligand>
</feature>
<feature type="binding site" evidence="1">
    <location>
        <position position="99"/>
    </location>
    <ligand>
        <name>a divalent metal cation</name>
        <dbReference type="ChEBI" id="CHEBI:60240"/>
    </ligand>
</feature>
<organism>
    <name type="scientific">Francisella tularensis subsp. holarctica (strain FTNF002-00 / FTA)</name>
    <dbReference type="NCBI Taxonomy" id="458234"/>
    <lineage>
        <taxon>Bacteria</taxon>
        <taxon>Pseudomonadati</taxon>
        <taxon>Pseudomonadota</taxon>
        <taxon>Gammaproteobacteria</taxon>
        <taxon>Thiotrichales</taxon>
        <taxon>Francisellaceae</taxon>
        <taxon>Francisella</taxon>
    </lineage>
</organism>
<sequence>MIILGIDEAGRGPLSGPVVAAGVILDQDKIIDGLADSKKLTEKKRQSLYQQIITHAKAYTIVEISPQQIDELNILQATLKAIHQVANNLERQFDKVLVDGNKLPNWDYNSEAIVKGDSKIIEISAASILAKVHRDNICLEHDRLYPQYGFAKHKGYPTKEHLENIKKYGVLDIHRKSYKPVQVLLNE</sequence>
<evidence type="ECO:0000255" key="1">
    <source>
        <dbReference type="HAMAP-Rule" id="MF_00052"/>
    </source>
</evidence>
<evidence type="ECO:0000255" key="2">
    <source>
        <dbReference type="PROSITE-ProRule" id="PRU01319"/>
    </source>
</evidence>
<protein>
    <recommendedName>
        <fullName evidence="1">Ribonuclease HII</fullName>
        <shortName evidence="1">RNase HII</shortName>
        <ecNumber evidence="1">3.1.26.4</ecNumber>
    </recommendedName>
</protein>
<name>RNH2_FRATF</name>
<dbReference type="EC" id="3.1.26.4" evidence="1"/>
<dbReference type="EMBL" id="CP000803">
    <property type="protein sequence ID" value="ABU61723.1"/>
    <property type="molecule type" value="Genomic_DNA"/>
</dbReference>
<dbReference type="RefSeq" id="WP_003016244.1">
    <property type="nucleotide sequence ID" value="NC_009749.1"/>
</dbReference>
<dbReference type="SMR" id="A7NCM0"/>
<dbReference type="KEGG" id="fta:FTA_1248"/>
<dbReference type="HOGENOM" id="CLU_036532_3_2_6"/>
<dbReference type="GO" id="GO:0005737">
    <property type="term" value="C:cytoplasm"/>
    <property type="evidence" value="ECO:0007669"/>
    <property type="project" value="UniProtKB-SubCell"/>
</dbReference>
<dbReference type="GO" id="GO:0032299">
    <property type="term" value="C:ribonuclease H2 complex"/>
    <property type="evidence" value="ECO:0007669"/>
    <property type="project" value="TreeGrafter"/>
</dbReference>
<dbReference type="GO" id="GO:0030145">
    <property type="term" value="F:manganese ion binding"/>
    <property type="evidence" value="ECO:0007669"/>
    <property type="project" value="UniProtKB-UniRule"/>
</dbReference>
<dbReference type="GO" id="GO:0003723">
    <property type="term" value="F:RNA binding"/>
    <property type="evidence" value="ECO:0007669"/>
    <property type="project" value="InterPro"/>
</dbReference>
<dbReference type="GO" id="GO:0004523">
    <property type="term" value="F:RNA-DNA hybrid ribonuclease activity"/>
    <property type="evidence" value="ECO:0007669"/>
    <property type="project" value="UniProtKB-UniRule"/>
</dbReference>
<dbReference type="GO" id="GO:0043137">
    <property type="term" value="P:DNA replication, removal of RNA primer"/>
    <property type="evidence" value="ECO:0007669"/>
    <property type="project" value="TreeGrafter"/>
</dbReference>
<dbReference type="GO" id="GO:0006298">
    <property type="term" value="P:mismatch repair"/>
    <property type="evidence" value="ECO:0007669"/>
    <property type="project" value="TreeGrafter"/>
</dbReference>
<dbReference type="CDD" id="cd07182">
    <property type="entry name" value="RNase_HII_bacteria_HII_like"/>
    <property type="match status" value="1"/>
</dbReference>
<dbReference type="FunFam" id="3.30.420.10:FF:000006">
    <property type="entry name" value="Ribonuclease HII"/>
    <property type="match status" value="1"/>
</dbReference>
<dbReference type="Gene3D" id="3.30.420.10">
    <property type="entry name" value="Ribonuclease H-like superfamily/Ribonuclease H"/>
    <property type="match status" value="1"/>
</dbReference>
<dbReference type="HAMAP" id="MF_00052_B">
    <property type="entry name" value="RNase_HII_B"/>
    <property type="match status" value="1"/>
</dbReference>
<dbReference type="InterPro" id="IPR022898">
    <property type="entry name" value="RNase_HII"/>
</dbReference>
<dbReference type="InterPro" id="IPR001352">
    <property type="entry name" value="RNase_HII/HIII"/>
</dbReference>
<dbReference type="InterPro" id="IPR024567">
    <property type="entry name" value="RNase_HII/HIII_dom"/>
</dbReference>
<dbReference type="InterPro" id="IPR012337">
    <property type="entry name" value="RNaseH-like_sf"/>
</dbReference>
<dbReference type="InterPro" id="IPR036397">
    <property type="entry name" value="RNaseH_sf"/>
</dbReference>
<dbReference type="NCBIfam" id="NF000595">
    <property type="entry name" value="PRK00015.1-3"/>
    <property type="match status" value="1"/>
</dbReference>
<dbReference type="NCBIfam" id="NF000596">
    <property type="entry name" value="PRK00015.1-4"/>
    <property type="match status" value="1"/>
</dbReference>
<dbReference type="PANTHER" id="PTHR10954">
    <property type="entry name" value="RIBONUCLEASE H2 SUBUNIT A"/>
    <property type="match status" value="1"/>
</dbReference>
<dbReference type="PANTHER" id="PTHR10954:SF18">
    <property type="entry name" value="RIBONUCLEASE HII"/>
    <property type="match status" value="1"/>
</dbReference>
<dbReference type="Pfam" id="PF01351">
    <property type="entry name" value="RNase_HII"/>
    <property type="match status" value="1"/>
</dbReference>
<dbReference type="SUPFAM" id="SSF53098">
    <property type="entry name" value="Ribonuclease H-like"/>
    <property type="match status" value="1"/>
</dbReference>
<dbReference type="PROSITE" id="PS51975">
    <property type="entry name" value="RNASE_H_2"/>
    <property type="match status" value="1"/>
</dbReference>
<accession>A7NCM0</accession>
<gene>
    <name evidence="1" type="primary">rnhB</name>
    <name type="ordered locus">FTA_1248</name>
</gene>
<keyword id="KW-0963">Cytoplasm</keyword>
<keyword id="KW-0255">Endonuclease</keyword>
<keyword id="KW-0378">Hydrolase</keyword>
<keyword id="KW-0464">Manganese</keyword>
<keyword id="KW-0479">Metal-binding</keyword>
<keyword id="KW-0540">Nuclease</keyword>
<comment type="function">
    <text evidence="1">Endonuclease that specifically degrades the RNA of RNA-DNA hybrids.</text>
</comment>
<comment type="catalytic activity">
    <reaction evidence="1">
        <text>Endonucleolytic cleavage to 5'-phosphomonoester.</text>
        <dbReference type="EC" id="3.1.26.4"/>
    </reaction>
</comment>
<comment type="cofactor">
    <cofactor evidence="1">
        <name>Mn(2+)</name>
        <dbReference type="ChEBI" id="CHEBI:29035"/>
    </cofactor>
    <cofactor evidence="1">
        <name>Mg(2+)</name>
        <dbReference type="ChEBI" id="CHEBI:18420"/>
    </cofactor>
    <text evidence="1">Manganese or magnesium. Binds 1 divalent metal ion per monomer in the absence of substrate. May bind a second metal ion after substrate binding.</text>
</comment>
<comment type="subcellular location">
    <subcellularLocation>
        <location evidence="1">Cytoplasm</location>
    </subcellularLocation>
</comment>
<comment type="similarity">
    <text evidence="1">Belongs to the RNase HII family.</text>
</comment>